<organism>
    <name type="scientific">Aromatoleum aromaticum (strain DSM 19018 / LMG 30748 / EbN1)</name>
    <name type="common">Azoarcus sp. (strain EbN1)</name>
    <dbReference type="NCBI Taxonomy" id="76114"/>
    <lineage>
        <taxon>Bacteria</taxon>
        <taxon>Pseudomonadati</taxon>
        <taxon>Pseudomonadota</taxon>
        <taxon>Betaproteobacteria</taxon>
        <taxon>Rhodocyclales</taxon>
        <taxon>Rhodocyclaceae</taxon>
        <taxon>Aromatoleum</taxon>
    </lineage>
</organism>
<gene>
    <name evidence="1" type="primary">purA</name>
    <name type="ordered locus">AZOSEA06640</name>
    <name type="ORF">ebA1249</name>
</gene>
<dbReference type="EC" id="6.3.4.4" evidence="1"/>
<dbReference type="EMBL" id="CR555306">
    <property type="protein sequence ID" value="CAI06787.1"/>
    <property type="molecule type" value="Genomic_DNA"/>
</dbReference>
<dbReference type="RefSeq" id="WP_011236515.1">
    <property type="nucleotide sequence ID" value="NC_006513.1"/>
</dbReference>
<dbReference type="SMR" id="Q5P7C4"/>
<dbReference type="STRING" id="76114.ebA1249"/>
<dbReference type="KEGG" id="eba:ebA1249"/>
<dbReference type="eggNOG" id="COG0104">
    <property type="taxonomic scope" value="Bacteria"/>
</dbReference>
<dbReference type="HOGENOM" id="CLU_029848_0_0_4"/>
<dbReference type="OrthoDB" id="9807553at2"/>
<dbReference type="UniPathway" id="UPA00075">
    <property type="reaction ID" value="UER00335"/>
</dbReference>
<dbReference type="Proteomes" id="UP000006552">
    <property type="component" value="Chromosome"/>
</dbReference>
<dbReference type="GO" id="GO:0005737">
    <property type="term" value="C:cytoplasm"/>
    <property type="evidence" value="ECO:0007669"/>
    <property type="project" value="UniProtKB-SubCell"/>
</dbReference>
<dbReference type="GO" id="GO:0004019">
    <property type="term" value="F:adenylosuccinate synthase activity"/>
    <property type="evidence" value="ECO:0007669"/>
    <property type="project" value="UniProtKB-UniRule"/>
</dbReference>
<dbReference type="GO" id="GO:0005525">
    <property type="term" value="F:GTP binding"/>
    <property type="evidence" value="ECO:0007669"/>
    <property type="project" value="UniProtKB-UniRule"/>
</dbReference>
<dbReference type="GO" id="GO:0000287">
    <property type="term" value="F:magnesium ion binding"/>
    <property type="evidence" value="ECO:0007669"/>
    <property type="project" value="UniProtKB-UniRule"/>
</dbReference>
<dbReference type="GO" id="GO:0044208">
    <property type="term" value="P:'de novo' AMP biosynthetic process"/>
    <property type="evidence" value="ECO:0007669"/>
    <property type="project" value="UniProtKB-UniRule"/>
</dbReference>
<dbReference type="GO" id="GO:0046040">
    <property type="term" value="P:IMP metabolic process"/>
    <property type="evidence" value="ECO:0007669"/>
    <property type="project" value="TreeGrafter"/>
</dbReference>
<dbReference type="CDD" id="cd03108">
    <property type="entry name" value="AdSS"/>
    <property type="match status" value="1"/>
</dbReference>
<dbReference type="FunFam" id="1.10.300.10:FF:000001">
    <property type="entry name" value="Adenylosuccinate synthetase"/>
    <property type="match status" value="1"/>
</dbReference>
<dbReference type="FunFam" id="3.90.170.10:FF:000001">
    <property type="entry name" value="Adenylosuccinate synthetase"/>
    <property type="match status" value="1"/>
</dbReference>
<dbReference type="Gene3D" id="3.40.440.10">
    <property type="entry name" value="Adenylosuccinate Synthetase, subunit A, domain 1"/>
    <property type="match status" value="1"/>
</dbReference>
<dbReference type="Gene3D" id="1.10.300.10">
    <property type="entry name" value="Adenylosuccinate Synthetase, subunit A, domain 2"/>
    <property type="match status" value="1"/>
</dbReference>
<dbReference type="Gene3D" id="3.90.170.10">
    <property type="entry name" value="Adenylosuccinate Synthetase, subunit A, domain 3"/>
    <property type="match status" value="1"/>
</dbReference>
<dbReference type="HAMAP" id="MF_00011">
    <property type="entry name" value="Adenylosucc_synth"/>
    <property type="match status" value="1"/>
</dbReference>
<dbReference type="InterPro" id="IPR018220">
    <property type="entry name" value="Adenylosuccin_syn_GTP-bd"/>
</dbReference>
<dbReference type="InterPro" id="IPR033128">
    <property type="entry name" value="Adenylosuccin_syn_Lys_AS"/>
</dbReference>
<dbReference type="InterPro" id="IPR042109">
    <property type="entry name" value="Adenylosuccinate_synth_dom1"/>
</dbReference>
<dbReference type="InterPro" id="IPR042110">
    <property type="entry name" value="Adenylosuccinate_synth_dom2"/>
</dbReference>
<dbReference type="InterPro" id="IPR042111">
    <property type="entry name" value="Adenylosuccinate_synth_dom3"/>
</dbReference>
<dbReference type="InterPro" id="IPR001114">
    <property type="entry name" value="Adenylosuccinate_synthetase"/>
</dbReference>
<dbReference type="InterPro" id="IPR027417">
    <property type="entry name" value="P-loop_NTPase"/>
</dbReference>
<dbReference type="NCBIfam" id="NF002223">
    <property type="entry name" value="PRK01117.1"/>
    <property type="match status" value="1"/>
</dbReference>
<dbReference type="NCBIfam" id="TIGR00184">
    <property type="entry name" value="purA"/>
    <property type="match status" value="1"/>
</dbReference>
<dbReference type="PANTHER" id="PTHR11846">
    <property type="entry name" value="ADENYLOSUCCINATE SYNTHETASE"/>
    <property type="match status" value="1"/>
</dbReference>
<dbReference type="PANTHER" id="PTHR11846:SF0">
    <property type="entry name" value="ADENYLOSUCCINATE SYNTHETASE"/>
    <property type="match status" value="1"/>
</dbReference>
<dbReference type="Pfam" id="PF00709">
    <property type="entry name" value="Adenylsucc_synt"/>
    <property type="match status" value="1"/>
</dbReference>
<dbReference type="SMART" id="SM00788">
    <property type="entry name" value="Adenylsucc_synt"/>
    <property type="match status" value="1"/>
</dbReference>
<dbReference type="SUPFAM" id="SSF52540">
    <property type="entry name" value="P-loop containing nucleoside triphosphate hydrolases"/>
    <property type="match status" value="1"/>
</dbReference>
<dbReference type="PROSITE" id="PS01266">
    <property type="entry name" value="ADENYLOSUCCIN_SYN_1"/>
    <property type="match status" value="1"/>
</dbReference>
<dbReference type="PROSITE" id="PS00513">
    <property type="entry name" value="ADENYLOSUCCIN_SYN_2"/>
    <property type="match status" value="1"/>
</dbReference>
<reference key="1">
    <citation type="journal article" date="2005" name="Arch. Microbiol.">
        <title>The genome sequence of an anaerobic aromatic-degrading denitrifying bacterium, strain EbN1.</title>
        <authorList>
            <person name="Rabus R."/>
            <person name="Kube M."/>
            <person name="Heider J."/>
            <person name="Beck A."/>
            <person name="Heitmann K."/>
            <person name="Widdel F."/>
            <person name="Reinhardt R."/>
        </authorList>
    </citation>
    <scope>NUCLEOTIDE SEQUENCE [LARGE SCALE GENOMIC DNA]</scope>
    <source>
        <strain>DSM 19018 / LMG 30748 / EbN1</strain>
    </source>
</reference>
<name>PURA_AROAE</name>
<accession>Q5P7C4</accession>
<evidence type="ECO:0000255" key="1">
    <source>
        <dbReference type="HAMAP-Rule" id="MF_00011"/>
    </source>
</evidence>
<sequence>MAKNVVVVGTQWGDEGKGKIVDWLTDHARGVVRFQGGHNAGHTLVIGANEYKLNLVPSGIVREGVACYIGNGVVLDAHHLLSEIRTLEAGGIRVRDRLRISPGCPLILGYHAALDRAREAAKSAGDKIGTTGKGIGPTYEDKVARRALRVYDLFDRERFAAKLRANLDYHNFVLTQHLGAEAVEFGSVFEQAMADAEEIRPMVADVSAELYAVNKSGGSLLFEGAQGTLLDIDHGTYPFVTSSNCVAGQAAAGSGVGPGRLHYVLGITKAYCTRVGGGPFPTELDIETADTPGQQMSSKGREFGTVTGRKRRCGWLDLGALKRSIIINGVTGLCITKLDVLDGLSELKLCTGYMLDGRRIDLLPMGSEEVTRCEPIFETMAGWSGTTFGAQSWEALPQEARAYLHRIEEICEIAIDVISTGPERDETILRRHPFGA</sequence>
<proteinExistence type="inferred from homology"/>
<keyword id="KW-0963">Cytoplasm</keyword>
<keyword id="KW-0342">GTP-binding</keyword>
<keyword id="KW-0436">Ligase</keyword>
<keyword id="KW-0460">Magnesium</keyword>
<keyword id="KW-0479">Metal-binding</keyword>
<keyword id="KW-0547">Nucleotide-binding</keyword>
<keyword id="KW-0658">Purine biosynthesis</keyword>
<keyword id="KW-1185">Reference proteome</keyword>
<comment type="function">
    <text evidence="1">Plays an important role in the de novo pathway of purine nucleotide biosynthesis. Catalyzes the first committed step in the biosynthesis of AMP from IMP.</text>
</comment>
<comment type="catalytic activity">
    <reaction evidence="1">
        <text>IMP + L-aspartate + GTP = N(6)-(1,2-dicarboxyethyl)-AMP + GDP + phosphate + 2 H(+)</text>
        <dbReference type="Rhea" id="RHEA:15753"/>
        <dbReference type="ChEBI" id="CHEBI:15378"/>
        <dbReference type="ChEBI" id="CHEBI:29991"/>
        <dbReference type="ChEBI" id="CHEBI:37565"/>
        <dbReference type="ChEBI" id="CHEBI:43474"/>
        <dbReference type="ChEBI" id="CHEBI:57567"/>
        <dbReference type="ChEBI" id="CHEBI:58053"/>
        <dbReference type="ChEBI" id="CHEBI:58189"/>
        <dbReference type="EC" id="6.3.4.4"/>
    </reaction>
</comment>
<comment type="cofactor">
    <cofactor evidence="1">
        <name>Mg(2+)</name>
        <dbReference type="ChEBI" id="CHEBI:18420"/>
    </cofactor>
    <text evidence="1">Binds 1 Mg(2+) ion per subunit.</text>
</comment>
<comment type="pathway">
    <text evidence="1">Purine metabolism; AMP biosynthesis via de novo pathway; AMP from IMP: step 1/2.</text>
</comment>
<comment type="subunit">
    <text evidence="1">Homodimer.</text>
</comment>
<comment type="subcellular location">
    <subcellularLocation>
        <location evidence="1">Cytoplasm</location>
    </subcellularLocation>
</comment>
<comment type="similarity">
    <text evidence="1">Belongs to the adenylosuccinate synthetase family.</text>
</comment>
<feature type="chain" id="PRO_0000224249" description="Adenylosuccinate synthetase">
    <location>
        <begin position="1"/>
        <end position="436"/>
    </location>
</feature>
<feature type="active site" description="Proton acceptor" evidence="1">
    <location>
        <position position="14"/>
    </location>
</feature>
<feature type="active site" description="Proton donor" evidence="1">
    <location>
        <position position="42"/>
    </location>
</feature>
<feature type="binding site" evidence="1">
    <location>
        <begin position="13"/>
        <end position="19"/>
    </location>
    <ligand>
        <name>GTP</name>
        <dbReference type="ChEBI" id="CHEBI:37565"/>
    </ligand>
</feature>
<feature type="binding site" description="in other chain" evidence="1">
    <location>
        <begin position="14"/>
        <end position="17"/>
    </location>
    <ligand>
        <name>IMP</name>
        <dbReference type="ChEBI" id="CHEBI:58053"/>
        <note>ligand shared between dimeric partners</note>
    </ligand>
</feature>
<feature type="binding site" evidence="1">
    <location>
        <position position="14"/>
    </location>
    <ligand>
        <name>Mg(2+)</name>
        <dbReference type="ChEBI" id="CHEBI:18420"/>
    </ligand>
</feature>
<feature type="binding site" description="in other chain" evidence="1">
    <location>
        <begin position="39"/>
        <end position="42"/>
    </location>
    <ligand>
        <name>IMP</name>
        <dbReference type="ChEBI" id="CHEBI:58053"/>
        <note>ligand shared between dimeric partners</note>
    </ligand>
</feature>
<feature type="binding site" evidence="1">
    <location>
        <begin position="41"/>
        <end position="43"/>
    </location>
    <ligand>
        <name>GTP</name>
        <dbReference type="ChEBI" id="CHEBI:37565"/>
    </ligand>
</feature>
<feature type="binding site" evidence="1">
    <location>
        <position position="41"/>
    </location>
    <ligand>
        <name>Mg(2+)</name>
        <dbReference type="ChEBI" id="CHEBI:18420"/>
    </ligand>
</feature>
<feature type="binding site" description="in other chain" evidence="1">
    <location>
        <position position="131"/>
    </location>
    <ligand>
        <name>IMP</name>
        <dbReference type="ChEBI" id="CHEBI:58053"/>
        <note>ligand shared between dimeric partners</note>
    </ligand>
</feature>
<feature type="binding site" evidence="1">
    <location>
        <position position="145"/>
    </location>
    <ligand>
        <name>IMP</name>
        <dbReference type="ChEBI" id="CHEBI:58053"/>
        <note>ligand shared between dimeric partners</note>
    </ligand>
</feature>
<feature type="binding site" description="in other chain" evidence="1">
    <location>
        <position position="226"/>
    </location>
    <ligand>
        <name>IMP</name>
        <dbReference type="ChEBI" id="CHEBI:58053"/>
        <note>ligand shared between dimeric partners</note>
    </ligand>
</feature>
<feature type="binding site" description="in other chain" evidence="1">
    <location>
        <position position="241"/>
    </location>
    <ligand>
        <name>IMP</name>
        <dbReference type="ChEBI" id="CHEBI:58053"/>
        <note>ligand shared between dimeric partners</note>
    </ligand>
</feature>
<feature type="binding site" evidence="1">
    <location>
        <begin position="305"/>
        <end position="311"/>
    </location>
    <ligand>
        <name>substrate</name>
    </ligand>
</feature>
<feature type="binding site" description="in other chain" evidence="1">
    <location>
        <position position="309"/>
    </location>
    <ligand>
        <name>IMP</name>
        <dbReference type="ChEBI" id="CHEBI:58053"/>
        <note>ligand shared between dimeric partners</note>
    </ligand>
</feature>
<feature type="binding site" evidence="1">
    <location>
        <position position="311"/>
    </location>
    <ligand>
        <name>GTP</name>
        <dbReference type="ChEBI" id="CHEBI:37565"/>
    </ligand>
</feature>
<feature type="binding site" evidence="1">
    <location>
        <begin position="337"/>
        <end position="339"/>
    </location>
    <ligand>
        <name>GTP</name>
        <dbReference type="ChEBI" id="CHEBI:37565"/>
    </ligand>
</feature>
<feature type="binding site" evidence="1">
    <location>
        <begin position="419"/>
        <end position="421"/>
    </location>
    <ligand>
        <name>GTP</name>
        <dbReference type="ChEBI" id="CHEBI:37565"/>
    </ligand>
</feature>
<protein>
    <recommendedName>
        <fullName evidence="1">Adenylosuccinate synthetase</fullName>
        <shortName evidence="1">AMPSase</shortName>
        <shortName evidence="1">AdSS</shortName>
        <ecNumber evidence="1">6.3.4.4</ecNumber>
    </recommendedName>
    <alternativeName>
        <fullName evidence="1">IMP--aspartate ligase</fullName>
    </alternativeName>
</protein>